<accession>Q814I6</accession>
<gene>
    <name type="primary">sodA2</name>
    <name type="ordered locus">BC_5445</name>
</gene>
<keyword id="KW-0464">Manganese</keyword>
<keyword id="KW-0479">Metal-binding</keyword>
<keyword id="KW-0560">Oxidoreductase</keyword>
<keyword id="KW-1185">Reference proteome</keyword>
<proteinExistence type="inferred from homology"/>
<name>SODM2_BACCR</name>
<evidence type="ECO:0000250" key="1"/>
<evidence type="ECO:0000305" key="2"/>
<reference key="1">
    <citation type="journal article" date="2003" name="Nature">
        <title>Genome sequence of Bacillus cereus and comparative analysis with Bacillus anthracis.</title>
        <authorList>
            <person name="Ivanova N."/>
            <person name="Sorokin A."/>
            <person name="Anderson I."/>
            <person name="Galleron N."/>
            <person name="Candelon B."/>
            <person name="Kapatral V."/>
            <person name="Bhattacharyya A."/>
            <person name="Reznik G."/>
            <person name="Mikhailova N."/>
            <person name="Lapidus A."/>
            <person name="Chu L."/>
            <person name="Mazur M."/>
            <person name="Goltsman E."/>
            <person name="Larsen N."/>
            <person name="D'Souza M."/>
            <person name="Walunas T."/>
            <person name="Grechkin Y."/>
            <person name="Pusch G."/>
            <person name="Haselkorn R."/>
            <person name="Fonstein M."/>
            <person name="Ehrlich S.D."/>
            <person name="Overbeek R."/>
            <person name="Kyrpides N.C."/>
        </authorList>
    </citation>
    <scope>NUCLEOTIDE SEQUENCE [LARGE SCALE GENOMIC DNA]</scope>
    <source>
        <strain>ATCC 14579 / DSM 31 / CCUG 7414 / JCM 2152 / NBRC 15305 / NCIMB 9373 / NCTC 2599 / NRRL B-3711</strain>
    </source>
</reference>
<organism>
    <name type="scientific">Bacillus cereus (strain ATCC 14579 / DSM 31 / CCUG 7414 / JCM 2152 / NBRC 15305 / NCIMB 9373 / NCTC 2599 / NRRL B-3711)</name>
    <dbReference type="NCBI Taxonomy" id="226900"/>
    <lineage>
        <taxon>Bacteria</taxon>
        <taxon>Bacillati</taxon>
        <taxon>Bacillota</taxon>
        <taxon>Bacilli</taxon>
        <taxon>Bacillales</taxon>
        <taxon>Bacillaceae</taxon>
        <taxon>Bacillus</taxon>
        <taxon>Bacillus cereus group</taxon>
    </lineage>
</organism>
<protein>
    <recommendedName>
        <fullName>Superoxide dismutase [Mn] 2</fullName>
        <ecNumber>1.15.1.1</ecNumber>
    </recommendedName>
</protein>
<feature type="chain" id="PRO_0000160016" description="Superoxide dismutase [Mn] 2">
    <location>
        <begin position="1"/>
        <end position="208"/>
    </location>
</feature>
<feature type="binding site" evidence="1">
    <location>
        <position position="28"/>
    </location>
    <ligand>
        <name>Mn(2+)</name>
        <dbReference type="ChEBI" id="CHEBI:29035"/>
    </ligand>
</feature>
<feature type="binding site" evidence="1">
    <location>
        <position position="83"/>
    </location>
    <ligand>
        <name>Mn(2+)</name>
        <dbReference type="ChEBI" id="CHEBI:29035"/>
    </ligand>
</feature>
<feature type="binding site" evidence="1">
    <location>
        <position position="165"/>
    </location>
    <ligand>
        <name>Mn(2+)</name>
        <dbReference type="ChEBI" id="CHEBI:29035"/>
    </ligand>
</feature>
<feature type="binding site" evidence="1">
    <location>
        <position position="169"/>
    </location>
    <ligand>
        <name>Mn(2+)</name>
        <dbReference type="ChEBI" id="CHEBI:29035"/>
    </ligand>
</feature>
<sequence length="208" mass="23999">MSSFQLPKLSYDYDELEPHIDSNTLSIHHGKHHATYVNNLNATLENYTELHNKSLEELLCNLDTLPKEIVTAVRNNGGGHYCHSLFWEVMSPRGGGEPNGDVAKVIDYYFNTFDNLKDQLSKAAISRFGSGYGWLVLDGEELSVMSTPNQDTPLQEGKIPLLVIDVWEHAYYLKYQNRRPEFVTNWWHTVNWDQVNEKYLQAIQSQKH</sequence>
<comment type="function">
    <text>Destroys superoxide anion radicals which are normally produced within the cells and which are toxic to biological systems.</text>
</comment>
<comment type="catalytic activity">
    <reaction>
        <text>2 superoxide + 2 H(+) = H2O2 + O2</text>
        <dbReference type="Rhea" id="RHEA:20696"/>
        <dbReference type="ChEBI" id="CHEBI:15378"/>
        <dbReference type="ChEBI" id="CHEBI:15379"/>
        <dbReference type="ChEBI" id="CHEBI:16240"/>
        <dbReference type="ChEBI" id="CHEBI:18421"/>
        <dbReference type="EC" id="1.15.1.1"/>
    </reaction>
</comment>
<comment type="cofactor">
    <cofactor evidence="1">
        <name>Mn(2+)</name>
        <dbReference type="ChEBI" id="CHEBI:29035"/>
    </cofactor>
    <text evidence="1">Binds 1 Mn(2+) ion per subunit.</text>
</comment>
<comment type="subunit">
    <text evidence="1">Homodimer.</text>
</comment>
<comment type="similarity">
    <text evidence="2">Belongs to the iron/manganese superoxide dismutase family.</text>
</comment>
<dbReference type="EC" id="1.15.1.1"/>
<dbReference type="EMBL" id="AE016877">
    <property type="protein sequence ID" value="AAP12307.1"/>
    <property type="molecule type" value="Genomic_DNA"/>
</dbReference>
<dbReference type="RefSeq" id="NP_835106.1">
    <property type="nucleotide sequence ID" value="NC_004722.1"/>
</dbReference>
<dbReference type="SMR" id="Q814I6"/>
<dbReference type="STRING" id="226900.BC_5445"/>
<dbReference type="KEGG" id="bce:BC5445"/>
<dbReference type="PATRIC" id="fig|226900.8.peg.5625"/>
<dbReference type="HOGENOM" id="CLU_031625_0_1_9"/>
<dbReference type="OrthoDB" id="9803125at2"/>
<dbReference type="PHI-base" id="PHI:9969"/>
<dbReference type="Proteomes" id="UP000001417">
    <property type="component" value="Chromosome"/>
</dbReference>
<dbReference type="GO" id="GO:0005737">
    <property type="term" value="C:cytoplasm"/>
    <property type="evidence" value="ECO:0000318"/>
    <property type="project" value="GO_Central"/>
</dbReference>
<dbReference type="GO" id="GO:0046872">
    <property type="term" value="F:metal ion binding"/>
    <property type="evidence" value="ECO:0007669"/>
    <property type="project" value="UniProtKB-KW"/>
</dbReference>
<dbReference type="GO" id="GO:0004784">
    <property type="term" value="F:superoxide dismutase activity"/>
    <property type="evidence" value="ECO:0000318"/>
    <property type="project" value="GO_Central"/>
</dbReference>
<dbReference type="GO" id="GO:0019430">
    <property type="term" value="P:removal of superoxide radicals"/>
    <property type="evidence" value="ECO:0000318"/>
    <property type="project" value="GO_Central"/>
</dbReference>
<dbReference type="FunFam" id="1.10.287.990:FF:000001">
    <property type="entry name" value="Superoxide dismutase"/>
    <property type="match status" value="1"/>
</dbReference>
<dbReference type="FunFam" id="3.55.40.20:FF:000006">
    <property type="entry name" value="Superoxide dismutase"/>
    <property type="match status" value="1"/>
</dbReference>
<dbReference type="Gene3D" id="1.10.287.990">
    <property type="entry name" value="Fe,Mn superoxide dismutase (SOD) domain"/>
    <property type="match status" value="1"/>
</dbReference>
<dbReference type="Gene3D" id="3.55.40.20">
    <property type="entry name" value="Iron/manganese superoxide dismutase, C-terminal domain"/>
    <property type="match status" value="1"/>
</dbReference>
<dbReference type="InterPro" id="IPR001189">
    <property type="entry name" value="Mn/Fe_SOD"/>
</dbReference>
<dbReference type="InterPro" id="IPR019833">
    <property type="entry name" value="Mn/Fe_SOD_BS"/>
</dbReference>
<dbReference type="InterPro" id="IPR019832">
    <property type="entry name" value="Mn/Fe_SOD_C"/>
</dbReference>
<dbReference type="InterPro" id="IPR019831">
    <property type="entry name" value="Mn/Fe_SOD_N"/>
</dbReference>
<dbReference type="InterPro" id="IPR036324">
    <property type="entry name" value="Mn/Fe_SOD_N_sf"/>
</dbReference>
<dbReference type="InterPro" id="IPR036314">
    <property type="entry name" value="SOD_C_sf"/>
</dbReference>
<dbReference type="PANTHER" id="PTHR43595">
    <property type="entry name" value="37S RIBOSOMAL PROTEIN S26, MITOCHONDRIAL"/>
    <property type="match status" value="1"/>
</dbReference>
<dbReference type="PANTHER" id="PTHR43595:SF2">
    <property type="entry name" value="SMALL RIBOSOMAL SUBUNIT PROTEIN MS42"/>
    <property type="match status" value="1"/>
</dbReference>
<dbReference type="Pfam" id="PF02777">
    <property type="entry name" value="Sod_Fe_C"/>
    <property type="match status" value="1"/>
</dbReference>
<dbReference type="Pfam" id="PF00081">
    <property type="entry name" value="Sod_Fe_N"/>
    <property type="match status" value="1"/>
</dbReference>
<dbReference type="PIRSF" id="PIRSF000349">
    <property type="entry name" value="SODismutase"/>
    <property type="match status" value="1"/>
</dbReference>
<dbReference type="PRINTS" id="PR01703">
    <property type="entry name" value="MNSODISMTASE"/>
</dbReference>
<dbReference type="SUPFAM" id="SSF54719">
    <property type="entry name" value="Fe,Mn superoxide dismutase (SOD), C-terminal domain"/>
    <property type="match status" value="1"/>
</dbReference>
<dbReference type="SUPFAM" id="SSF46609">
    <property type="entry name" value="Fe,Mn superoxide dismutase (SOD), N-terminal domain"/>
    <property type="match status" value="1"/>
</dbReference>
<dbReference type="PROSITE" id="PS00088">
    <property type="entry name" value="SOD_MN"/>
    <property type="match status" value="1"/>
</dbReference>